<gene>
    <name type="primary">rps2501</name>
    <name type="synonym">rps25b</name>
    <name type="ORF">SPBC3D6.15</name>
</gene>
<reference key="1">
    <citation type="submission" date="1998-07" db="EMBL/GenBank/DDBJ databases">
        <title>S.pombe ribosomal protein S31 homolog.</title>
        <authorList>
            <person name="Kawamukai M."/>
        </authorList>
    </citation>
    <scope>NUCLEOTIDE SEQUENCE [MRNA]</scope>
</reference>
<reference key="2">
    <citation type="journal article" date="2002" name="Nature">
        <title>The genome sequence of Schizosaccharomyces pombe.</title>
        <authorList>
            <person name="Wood V."/>
            <person name="Gwilliam R."/>
            <person name="Rajandream M.A."/>
            <person name="Lyne M.H."/>
            <person name="Lyne R."/>
            <person name="Stewart A."/>
            <person name="Sgouros J.G."/>
            <person name="Peat N."/>
            <person name="Hayles J."/>
            <person name="Baker S.G."/>
            <person name="Basham D."/>
            <person name="Bowman S."/>
            <person name="Brooks K."/>
            <person name="Brown D."/>
            <person name="Brown S."/>
            <person name="Chillingworth T."/>
            <person name="Churcher C.M."/>
            <person name="Collins M."/>
            <person name="Connor R."/>
            <person name="Cronin A."/>
            <person name="Davis P."/>
            <person name="Feltwell T."/>
            <person name="Fraser A."/>
            <person name="Gentles S."/>
            <person name="Goble A."/>
            <person name="Hamlin N."/>
            <person name="Harris D.E."/>
            <person name="Hidalgo J."/>
            <person name="Hodgson G."/>
            <person name="Holroyd S."/>
            <person name="Hornsby T."/>
            <person name="Howarth S."/>
            <person name="Huckle E.J."/>
            <person name="Hunt S."/>
            <person name="Jagels K."/>
            <person name="James K.D."/>
            <person name="Jones L."/>
            <person name="Jones M."/>
            <person name="Leather S."/>
            <person name="McDonald S."/>
            <person name="McLean J."/>
            <person name="Mooney P."/>
            <person name="Moule S."/>
            <person name="Mungall K.L."/>
            <person name="Murphy L.D."/>
            <person name="Niblett D."/>
            <person name="Odell C."/>
            <person name="Oliver K."/>
            <person name="O'Neil S."/>
            <person name="Pearson D."/>
            <person name="Quail M.A."/>
            <person name="Rabbinowitsch E."/>
            <person name="Rutherford K.M."/>
            <person name="Rutter S."/>
            <person name="Saunders D."/>
            <person name="Seeger K."/>
            <person name="Sharp S."/>
            <person name="Skelton J."/>
            <person name="Simmonds M.N."/>
            <person name="Squares R."/>
            <person name="Squares S."/>
            <person name="Stevens K."/>
            <person name="Taylor K."/>
            <person name="Taylor R.G."/>
            <person name="Tivey A."/>
            <person name="Walsh S.V."/>
            <person name="Warren T."/>
            <person name="Whitehead S."/>
            <person name="Woodward J.R."/>
            <person name="Volckaert G."/>
            <person name="Aert R."/>
            <person name="Robben J."/>
            <person name="Grymonprez B."/>
            <person name="Weltjens I."/>
            <person name="Vanstreels E."/>
            <person name="Rieger M."/>
            <person name="Schaefer M."/>
            <person name="Mueller-Auer S."/>
            <person name="Gabel C."/>
            <person name="Fuchs M."/>
            <person name="Duesterhoeft A."/>
            <person name="Fritzc C."/>
            <person name="Holzer E."/>
            <person name="Moestl D."/>
            <person name="Hilbert H."/>
            <person name="Borzym K."/>
            <person name="Langer I."/>
            <person name="Beck A."/>
            <person name="Lehrach H."/>
            <person name="Reinhardt R."/>
            <person name="Pohl T.M."/>
            <person name="Eger P."/>
            <person name="Zimmermann W."/>
            <person name="Wedler H."/>
            <person name="Wambutt R."/>
            <person name="Purnelle B."/>
            <person name="Goffeau A."/>
            <person name="Cadieu E."/>
            <person name="Dreano S."/>
            <person name="Gloux S."/>
            <person name="Lelaure V."/>
            <person name="Mottier S."/>
            <person name="Galibert F."/>
            <person name="Aves S.J."/>
            <person name="Xiang Z."/>
            <person name="Hunt C."/>
            <person name="Moore K."/>
            <person name="Hurst S.M."/>
            <person name="Lucas M."/>
            <person name="Rochet M."/>
            <person name="Gaillardin C."/>
            <person name="Tallada V.A."/>
            <person name="Garzon A."/>
            <person name="Thode G."/>
            <person name="Daga R.R."/>
            <person name="Cruzado L."/>
            <person name="Jimenez J."/>
            <person name="Sanchez M."/>
            <person name="del Rey F."/>
            <person name="Benito J."/>
            <person name="Dominguez A."/>
            <person name="Revuelta J.L."/>
            <person name="Moreno S."/>
            <person name="Armstrong J."/>
            <person name="Forsburg S.L."/>
            <person name="Cerutti L."/>
            <person name="Lowe T."/>
            <person name="McCombie W.R."/>
            <person name="Paulsen I."/>
            <person name="Potashkin J."/>
            <person name="Shpakovski G.V."/>
            <person name="Ussery D."/>
            <person name="Barrell B.G."/>
            <person name="Nurse P."/>
        </authorList>
    </citation>
    <scope>NUCLEOTIDE SEQUENCE [LARGE SCALE GENOMIC DNA]</scope>
    <source>
        <strain>972 / ATCC 24843</strain>
    </source>
</reference>
<reference key="3">
    <citation type="journal article" date="2000" name="Genes Cells">
        <title>Large-scale screening of intracellular protein localization in living fission yeast cells by the use of a GFP-fusion genomic DNA library.</title>
        <authorList>
            <person name="Ding D.-Q."/>
            <person name="Tomita Y."/>
            <person name="Yamamoto A."/>
            <person name="Chikashige Y."/>
            <person name="Haraguchi T."/>
            <person name="Hiraoka Y."/>
        </authorList>
    </citation>
    <scope>NUCLEOTIDE SEQUENCE [LARGE SCALE GENOMIC DNA] OF 2-51</scope>
    <source>
        <strain>ATCC 38364 / 968</strain>
    </source>
</reference>
<reference key="4">
    <citation type="journal article" date="2006" name="Nat. Biotechnol.">
        <title>ORFeome cloning and global analysis of protein localization in the fission yeast Schizosaccharomyces pombe.</title>
        <authorList>
            <person name="Matsuyama A."/>
            <person name="Arai R."/>
            <person name="Yashiroda Y."/>
            <person name="Shirai A."/>
            <person name="Kamata A."/>
            <person name="Sekido S."/>
            <person name="Kobayashi Y."/>
            <person name="Hashimoto A."/>
            <person name="Hamamoto M."/>
            <person name="Hiraoka Y."/>
            <person name="Horinouchi S."/>
            <person name="Yoshida M."/>
        </authorList>
    </citation>
    <scope>SUBCELLULAR LOCATION [LARGE SCALE ANALYSIS]</scope>
</reference>
<evidence type="ECO:0000250" key="1">
    <source>
        <dbReference type="UniProtKB" id="P0C0T4"/>
    </source>
</evidence>
<evidence type="ECO:0000269" key="2">
    <source>
    </source>
</evidence>
<evidence type="ECO:0000305" key="3"/>
<feature type="chain" id="PRO_0000192890" description="Small ribosomal subunit protein eS25B">
    <location>
        <begin position="1"/>
        <end position="88"/>
    </location>
</feature>
<sequence length="88" mass="9820">MAPKKKWSKGKVKDKAQHATVFDKSIIDRINKEVPAFKFISVSVLVDRMKINGSLARIAIRDLAERGVIQKVDQHSKQAIYTRAAASA</sequence>
<accession>O74172</accession>
<accession>Q9UU26</accession>
<proteinExistence type="inferred from homology"/>
<organism>
    <name type="scientific">Schizosaccharomyces pombe (strain 972 / ATCC 24843)</name>
    <name type="common">Fission yeast</name>
    <dbReference type="NCBI Taxonomy" id="284812"/>
    <lineage>
        <taxon>Eukaryota</taxon>
        <taxon>Fungi</taxon>
        <taxon>Dikarya</taxon>
        <taxon>Ascomycota</taxon>
        <taxon>Taphrinomycotina</taxon>
        <taxon>Schizosaccharomycetes</taxon>
        <taxon>Schizosaccharomycetales</taxon>
        <taxon>Schizosaccharomycetaceae</taxon>
        <taxon>Schizosaccharomyces</taxon>
    </lineage>
</organism>
<comment type="function">
    <text evidence="1">Component of the ribosome, a large ribonucleoprotein complex responsible for the synthesis of proteins in the cell. The small ribosomal subunit (SSU) binds messenger RNAs (mRNAs) and translates the encoded message by selecting cognate aminoacyl-transfer RNA (tRNA) molecules. The large subunit (LSU) contains the ribosomal catalytic site termed the peptidyl transferase center (PTC), which catalyzes the formation of peptide bonds, thereby polymerizing the amino acids delivered by tRNAs into a polypeptide chain. The nascent polypeptides leave the ribosome through a tunnel in the LSU and interact with protein factors that function in enzymatic processing, targeting, and the membrane insertion of nascent chains at the exit of the ribosomal tunnel.</text>
</comment>
<comment type="subunit">
    <text evidence="1">Component of the small ribosomal subunit (SSU). Mature yeast ribosomes consist of a small (40S) and a large (60S) subunit. The 40S small subunit contains 1 molecule of ribosomal RNA (18S rRNA) and at least 33 different proteins. The large 60S subunit contains 3 rRNA molecules (25S, 5.8S and 5S rRNA) and at least 46 different proteins.</text>
</comment>
<comment type="subcellular location">
    <subcellularLocation>
        <location evidence="2">Cytoplasm</location>
    </subcellularLocation>
</comment>
<comment type="miscellaneous">
    <text>There are 2 genes for eS25 in S.pombe.</text>
</comment>
<comment type="similarity">
    <text evidence="3">Belongs to the eukaryotic ribosomal protein eS25 family.</text>
</comment>
<keyword id="KW-0963">Cytoplasm</keyword>
<keyword id="KW-1185">Reference proteome</keyword>
<keyword id="KW-0687">Ribonucleoprotein</keyword>
<keyword id="KW-0689">Ribosomal protein</keyword>
<protein>
    <recommendedName>
        <fullName evidence="3">Small ribosomal subunit protein eS25B</fullName>
    </recommendedName>
    <alternativeName>
        <fullName>40S ribosomal protein S25-B</fullName>
    </alternativeName>
    <alternativeName>
        <fullName>S31-B</fullName>
    </alternativeName>
</protein>
<dbReference type="EMBL" id="AB016006">
    <property type="protein sequence ID" value="BAA31553.1"/>
    <property type="molecule type" value="mRNA"/>
</dbReference>
<dbReference type="EMBL" id="CU329671">
    <property type="protein sequence ID" value="CAB09129.2"/>
    <property type="molecule type" value="Genomic_DNA"/>
</dbReference>
<dbReference type="EMBL" id="AB027855">
    <property type="protein sequence ID" value="BAA87159.1"/>
    <property type="molecule type" value="Genomic_DNA"/>
</dbReference>
<dbReference type="PIR" id="T43379">
    <property type="entry name" value="T43379"/>
</dbReference>
<dbReference type="RefSeq" id="NP_595515.1">
    <property type="nucleotide sequence ID" value="NM_001021424.2"/>
</dbReference>
<dbReference type="SMR" id="O74172"/>
<dbReference type="BioGRID" id="277481">
    <property type="interactions" value="2"/>
</dbReference>
<dbReference type="FunCoup" id="O74172">
    <property type="interactions" value="486"/>
</dbReference>
<dbReference type="STRING" id="284812.O74172"/>
<dbReference type="iPTMnet" id="O74172"/>
<dbReference type="PaxDb" id="4896-SPBC3D6.15.1"/>
<dbReference type="EnsemblFungi" id="SPBC3D6.15.1">
    <property type="protein sequence ID" value="SPBC3D6.15.1:pep"/>
    <property type="gene ID" value="SPBC3D6.15"/>
</dbReference>
<dbReference type="GeneID" id="2540965"/>
<dbReference type="KEGG" id="spo:2540965"/>
<dbReference type="PomBase" id="SPBC3D6.15">
    <property type="gene designation" value="rps2501"/>
</dbReference>
<dbReference type="VEuPathDB" id="FungiDB:SPBC3D6.15"/>
<dbReference type="eggNOG" id="KOG1767">
    <property type="taxonomic scope" value="Eukaryota"/>
</dbReference>
<dbReference type="HOGENOM" id="CLU_129470_4_0_1"/>
<dbReference type="InParanoid" id="O74172"/>
<dbReference type="OMA" id="RIVHHSG"/>
<dbReference type="PhylomeDB" id="O74172"/>
<dbReference type="Reactome" id="R-SPO-156827">
    <property type="pathway name" value="L13a-mediated translational silencing of Ceruloplasmin expression"/>
</dbReference>
<dbReference type="Reactome" id="R-SPO-1799339">
    <property type="pathway name" value="SRP-dependent cotranslational protein targeting to membrane"/>
</dbReference>
<dbReference type="Reactome" id="R-SPO-72649">
    <property type="pathway name" value="Translation initiation complex formation"/>
</dbReference>
<dbReference type="Reactome" id="R-SPO-72689">
    <property type="pathway name" value="Formation of a pool of free 40S subunits"/>
</dbReference>
<dbReference type="Reactome" id="R-SPO-72695">
    <property type="pathway name" value="Formation of the ternary complex, and subsequently, the 43S complex"/>
</dbReference>
<dbReference type="Reactome" id="R-SPO-72702">
    <property type="pathway name" value="Ribosomal scanning and start codon recognition"/>
</dbReference>
<dbReference type="Reactome" id="R-SPO-72706">
    <property type="pathway name" value="GTP hydrolysis and joining of the 60S ribosomal subunit"/>
</dbReference>
<dbReference type="Reactome" id="R-SPO-975956">
    <property type="pathway name" value="Nonsense Mediated Decay (NMD) independent of the Exon Junction Complex (EJC)"/>
</dbReference>
<dbReference type="Reactome" id="R-SPO-975957">
    <property type="pathway name" value="Nonsense Mediated Decay (NMD) enhanced by the Exon Junction Complex (EJC)"/>
</dbReference>
<dbReference type="PRO" id="PR:O74172"/>
<dbReference type="Proteomes" id="UP000002485">
    <property type="component" value="Chromosome II"/>
</dbReference>
<dbReference type="GO" id="GO:0010494">
    <property type="term" value="C:cytoplasmic stress granule"/>
    <property type="evidence" value="ECO:0000269"/>
    <property type="project" value="PomBase"/>
</dbReference>
<dbReference type="GO" id="GO:0005829">
    <property type="term" value="C:cytosol"/>
    <property type="evidence" value="ECO:0007005"/>
    <property type="project" value="PomBase"/>
</dbReference>
<dbReference type="GO" id="GO:0022627">
    <property type="term" value="C:cytosolic small ribosomal subunit"/>
    <property type="evidence" value="ECO:0000318"/>
    <property type="project" value="GO_Central"/>
</dbReference>
<dbReference type="GO" id="GO:0003735">
    <property type="term" value="F:structural constituent of ribosome"/>
    <property type="evidence" value="ECO:0000318"/>
    <property type="project" value="GO_Central"/>
</dbReference>
<dbReference type="GO" id="GO:0002181">
    <property type="term" value="P:cytoplasmic translation"/>
    <property type="evidence" value="ECO:0000266"/>
    <property type="project" value="PomBase"/>
</dbReference>
<dbReference type="FunFam" id="3.30.63.20:FF:000001">
    <property type="entry name" value="40S ribosomal protein S25"/>
    <property type="match status" value="1"/>
</dbReference>
<dbReference type="Gene3D" id="3.30.63.20">
    <property type="match status" value="1"/>
</dbReference>
<dbReference type="InterPro" id="IPR004977">
    <property type="entry name" value="Ribosomal_eS25"/>
</dbReference>
<dbReference type="PANTHER" id="PTHR12850">
    <property type="entry name" value="40S RIBOSOMAL PROTEIN S25"/>
    <property type="match status" value="1"/>
</dbReference>
<dbReference type="Pfam" id="PF03297">
    <property type="entry name" value="Ribosomal_S25"/>
    <property type="match status" value="1"/>
</dbReference>
<name>RS25B_SCHPO</name>